<comment type="function">
    <text evidence="1">NDH-1 shuttles electrons from NADH, via FMN and iron-sulfur (Fe-S) centers, to quinones in the respiratory chain. The immediate electron acceptor for the enzyme in this species is believed to be ubiquinone. Couples the redox reaction to proton translocation (for every two electrons transferred, four hydrogen ions are translocated across the cytoplasmic membrane), and thus conserves the redox energy in a proton gradient. This subunit may bind ubiquinone.</text>
</comment>
<comment type="catalytic activity">
    <reaction evidence="1">
        <text>a quinone + NADH + 5 H(+)(in) = a quinol + NAD(+) + 4 H(+)(out)</text>
        <dbReference type="Rhea" id="RHEA:57888"/>
        <dbReference type="ChEBI" id="CHEBI:15378"/>
        <dbReference type="ChEBI" id="CHEBI:24646"/>
        <dbReference type="ChEBI" id="CHEBI:57540"/>
        <dbReference type="ChEBI" id="CHEBI:57945"/>
        <dbReference type="ChEBI" id="CHEBI:132124"/>
    </reaction>
</comment>
<comment type="subunit">
    <text evidence="1">NDH-1 is composed of 14 different subunits. Subunits NuoA, H, J, K, L, M, N constitute the membrane sector of the complex.</text>
</comment>
<comment type="subcellular location">
    <subcellularLocation>
        <location evidence="1">Cell inner membrane</location>
        <topology evidence="1">Multi-pass membrane protein</topology>
    </subcellularLocation>
</comment>
<comment type="similarity">
    <text evidence="1">Belongs to the complex I subunit 1 family.</text>
</comment>
<sequence>MSAYIIETLIKILILVAVFSALGGFATYIERKVLAYFQRRLGPCYVGPFGLLQVAADGIKLFTKEDIIPQGANKFIFTLAPIIAMVSAFVSMAPIPFFPNFTLFGYEIKPLISDINIGFLFFLAVGAAGIYAPILAGLASNNKYSLIGSARATIQLLSFEVVSTLTILAPLMVVGSLSLVEINHYQSGGFLDWLVFKQPLAFVLFLIASYAELNRTPFDLLEHEAEIVAGYCTEYSGLKWGMFFLAEYAHLFAFSFVISIVFFGGFNAWGFIPGGIAILIKAGFFVFLSMWVRATYPHVRPDQLMNMCWKIMLPLALLNIVLTGIIILI</sequence>
<protein>
    <recommendedName>
        <fullName evidence="1">NADH-quinone oxidoreductase subunit H</fullName>
        <ecNumber evidence="1">7.1.1.-</ecNumber>
    </recommendedName>
    <alternativeName>
        <fullName evidence="1">NADH dehydrogenase I subunit H</fullName>
    </alternativeName>
    <alternativeName>
        <fullName evidence="1">NDH-1 subunit H</fullName>
    </alternativeName>
</protein>
<organism>
    <name type="scientific">Helicobacter pylori (strain HPAG1)</name>
    <dbReference type="NCBI Taxonomy" id="357544"/>
    <lineage>
        <taxon>Bacteria</taxon>
        <taxon>Pseudomonadati</taxon>
        <taxon>Campylobacterota</taxon>
        <taxon>Epsilonproteobacteria</taxon>
        <taxon>Campylobacterales</taxon>
        <taxon>Helicobacteraceae</taxon>
        <taxon>Helicobacter</taxon>
    </lineage>
</organism>
<keyword id="KW-0997">Cell inner membrane</keyword>
<keyword id="KW-1003">Cell membrane</keyword>
<keyword id="KW-0472">Membrane</keyword>
<keyword id="KW-0520">NAD</keyword>
<keyword id="KW-0874">Quinone</keyword>
<keyword id="KW-1278">Translocase</keyword>
<keyword id="KW-0812">Transmembrane</keyword>
<keyword id="KW-1133">Transmembrane helix</keyword>
<keyword id="KW-0830">Ubiquinone</keyword>
<gene>
    <name evidence="1" type="primary">nuoH</name>
    <name type="ordered locus">HPAG1_1211</name>
</gene>
<feature type="chain" id="PRO_0000298819" description="NADH-quinone oxidoreductase subunit H">
    <location>
        <begin position="1"/>
        <end position="329"/>
    </location>
</feature>
<feature type="transmembrane region" description="Helical" evidence="1">
    <location>
        <begin position="9"/>
        <end position="29"/>
    </location>
</feature>
<feature type="transmembrane region" description="Helical" evidence="1">
    <location>
        <begin position="42"/>
        <end position="62"/>
    </location>
</feature>
<feature type="transmembrane region" description="Helical" evidence="1">
    <location>
        <begin position="75"/>
        <end position="95"/>
    </location>
</feature>
<feature type="transmembrane region" description="Helical" evidence="1">
    <location>
        <begin position="117"/>
        <end position="137"/>
    </location>
</feature>
<feature type="transmembrane region" description="Helical" evidence="1">
    <location>
        <begin position="154"/>
        <end position="174"/>
    </location>
</feature>
<feature type="transmembrane region" description="Helical" evidence="1">
    <location>
        <begin position="188"/>
        <end position="208"/>
    </location>
</feature>
<feature type="transmembrane region" description="Helical" evidence="1">
    <location>
        <begin position="238"/>
        <end position="258"/>
    </location>
</feature>
<feature type="transmembrane region" description="Helical" evidence="1">
    <location>
        <begin position="269"/>
        <end position="291"/>
    </location>
</feature>
<feature type="transmembrane region" description="Helical" evidence="1">
    <location>
        <begin position="309"/>
        <end position="329"/>
    </location>
</feature>
<dbReference type="EC" id="7.1.1.-" evidence="1"/>
<dbReference type="EMBL" id="CP000241">
    <property type="protein sequence ID" value="ABF85278.1"/>
    <property type="molecule type" value="Genomic_DNA"/>
</dbReference>
<dbReference type="RefSeq" id="WP_001277289.1">
    <property type="nucleotide sequence ID" value="NC_008086.1"/>
</dbReference>
<dbReference type="SMR" id="Q1CRZ4"/>
<dbReference type="KEGG" id="hpa:HPAG1_1211"/>
<dbReference type="HOGENOM" id="CLU_015134_0_1_7"/>
<dbReference type="GO" id="GO:0005886">
    <property type="term" value="C:plasma membrane"/>
    <property type="evidence" value="ECO:0007669"/>
    <property type="project" value="UniProtKB-SubCell"/>
</dbReference>
<dbReference type="GO" id="GO:0003954">
    <property type="term" value="F:NADH dehydrogenase activity"/>
    <property type="evidence" value="ECO:0007669"/>
    <property type="project" value="TreeGrafter"/>
</dbReference>
<dbReference type="GO" id="GO:0016655">
    <property type="term" value="F:oxidoreductase activity, acting on NAD(P)H, quinone or similar compound as acceptor"/>
    <property type="evidence" value="ECO:0007669"/>
    <property type="project" value="UniProtKB-UniRule"/>
</dbReference>
<dbReference type="GO" id="GO:0048038">
    <property type="term" value="F:quinone binding"/>
    <property type="evidence" value="ECO:0007669"/>
    <property type="project" value="UniProtKB-KW"/>
</dbReference>
<dbReference type="GO" id="GO:0009060">
    <property type="term" value="P:aerobic respiration"/>
    <property type="evidence" value="ECO:0007669"/>
    <property type="project" value="TreeGrafter"/>
</dbReference>
<dbReference type="HAMAP" id="MF_01350">
    <property type="entry name" value="NDH1_NuoH"/>
    <property type="match status" value="1"/>
</dbReference>
<dbReference type="InterPro" id="IPR001694">
    <property type="entry name" value="NADH_UbQ_OxRdtase_su1/FPO"/>
</dbReference>
<dbReference type="InterPro" id="IPR018086">
    <property type="entry name" value="NADH_UbQ_OxRdtase_su1_CS"/>
</dbReference>
<dbReference type="NCBIfam" id="NF004741">
    <property type="entry name" value="PRK06076.1-2"/>
    <property type="match status" value="1"/>
</dbReference>
<dbReference type="PANTHER" id="PTHR11432">
    <property type="entry name" value="NADH DEHYDROGENASE SUBUNIT 1"/>
    <property type="match status" value="1"/>
</dbReference>
<dbReference type="PANTHER" id="PTHR11432:SF3">
    <property type="entry name" value="NADH-UBIQUINONE OXIDOREDUCTASE CHAIN 1"/>
    <property type="match status" value="1"/>
</dbReference>
<dbReference type="Pfam" id="PF00146">
    <property type="entry name" value="NADHdh"/>
    <property type="match status" value="1"/>
</dbReference>
<dbReference type="PROSITE" id="PS00667">
    <property type="entry name" value="COMPLEX1_ND1_1"/>
    <property type="match status" value="1"/>
</dbReference>
<name>NUOH_HELPH</name>
<evidence type="ECO:0000255" key="1">
    <source>
        <dbReference type="HAMAP-Rule" id="MF_01350"/>
    </source>
</evidence>
<reference key="1">
    <citation type="journal article" date="2006" name="Proc. Natl. Acad. Sci. U.S.A.">
        <title>The complete genome sequence of a chronic atrophic gastritis Helicobacter pylori strain: evolution during disease progression.</title>
        <authorList>
            <person name="Oh J.D."/>
            <person name="Kling-Baeckhed H."/>
            <person name="Giannakis M."/>
            <person name="Xu J."/>
            <person name="Fulton R.S."/>
            <person name="Fulton L.A."/>
            <person name="Cordum H.S."/>
            <person name="Wang C."/>
            <person name="Elliott G."/>
            <person name="Edwards J."/>
            <person name="Mardis E.R."/>
            <person name="Engstrand L.G."/>
            <person name="Gordon J.I."/>
        </authorList>
    </citation>
    <scope>NUCLEOTIDE SEQUENCE [LARGE SCALE GENOMIC DNA]</scope>
    <source>
        <strain>HPAG1</strain>
    </source>
</reference>
<accession>Q1CRZ4</accession>
<proteinExistence type="inferred from homology"/>